<name>HERP2_MOUSE</name>
<feature type="chain" id="PRO_0000280628" description="Homocysteine-responsive endoplasmic reticulum-resident ubiquitin-like domain member 2 protein">
    <location>
        <begin position="1"/>
        <end position="404"/>
    </location>
</feature>
<feature type="transmembrane region" description="Helical" evidence="2">
    <location>
        <begin position="301"/>
        <end position="321"/>
    </location>
</feature>
<feature type="domain" description="Ubiquitin-like" evidence="3">
    <location>
        <begin position="10"/>
        <end position="89"/>
    </location>
</feature>
<feature type="region of interest" description="Disordered" evidence="4">
    <location>
        <begin position="86"/>
        <end position="153"/>
    </location>
</feature>
<feature type="compositionally biased region" description="Low complexity" evidence="4">
    <location>
        <begin position="88"/>
        <end position="97"/>
    </location>
</feature>
<feature type="compositionally biased region" description="Low complexity" evidence="4">
    <location>
        <begin position="109"/>
        <end position="126"/>
    </location>
</feature>
<feature type="compositionally biased region" description="Polar residues" evidence="4">
    <location>
        <begin position="127"/>
        <end position="153"/>
    </location>
</feature>
<feature type="sequence conflict" description="In Ref. 3; AAH29691." evidence="5" ref="3">
    <original>G</original>
    <variation>S</variation>
    <location>
        <position position="218"/>
    </location>
</feature>
<feature type="sequence conflict" description="In Ref. 2; BAB31889." evidence="5" ref="2">
    <original>N</original>
    <variation>K</variation>
    <location>
        <position position="267"/>
    </location>
</feature>
<feature type="sequence conflict" description="In Ref. 2; BAB27742." evidence="5" ref="2">
    <original>D</original>
    <variation>P</variation>
    <location>
        <position position="339"/>
    </location>
</feature>
<evidence type="ECO:0000250" key="1"/>
<evidence type="ECO:0000255" key="2"/>
<evidence type="ECO:0000255" key="3">
    <source>
        <dbReference type="PROSITE-ProRule" id="PRU00214"/>
    </source>
</evidence>
<evidence type="ECO:0000256" key="4">
    <source>
        <dbReference type="SAM" id="MobiDB-lite"/>
    </source>
</evidence>
<evidence type="ECO:0000305" key="5"/>
<sequence>MDQSGMEIPVTLIIKAPNQKYSDQTISCFLNWTVGKLKTHLSNVYPSKPLTKDQRLVYSGRLLPDHLQLKDILRKQDEYHMVHLVCASRSPPSSPKSSTDRGSHEALASSTSSNSDHSDSTTPSPSQESLSLVTGSSEGLRQRTLSQAQTDPAQSHQFPYVIQGNVDHQFPGQGVPPAFPVYPALSPLQMLWWQQMYAHQYYMQYQAAVSAQATSSAGSAQRAASSPLNLAHVPGEEPPPAPNLVAQENGPMNENVQMNAQGGPVLNEEDLNRDWLDWVYTFSRAAVLLSIVYFYSSFSRFIMVMGAMLLVYLHQAGWFPFRQEGGQQQAPNNVDANNDGHNANNLELEEMERLMDDGLEDESGEDAGEDASAAQRPGLMASAWSFITTFFTSLIPEGPPQVAN</sequence>
<gene>
    <name type="primary">Herpud2</name>
    <name type="ORF">MNCb-2040</name>
</gene>
<proteinExistence type="evidence at transcript level"/>
<protein>
    <recommendedName>
        <fullName>Homocysteine-responsive endoplasmic reticulum-resident ubiquitin-like domain member 2 protein</fullName>
    </recommendedName>
</protein>
<dbReference type="EMBL" id="AB041580">
    <property type="protein sequence ID" value="BAA95064.1"/>
    <property type="molecule type" value="mRNA"/>
</dbReference>
<dbReference type="EMBL" id="AK011625">
    <property type="protein sequence ID" value="BAB27742.1"/>
    <property type="molecule type" value="mRNA"/>
</dbReference>
<dbReference type="EMBL" id="AK019862">
    <property type="protein sequence ID" value="BAB31889.1"/>
    <property type="molecule type" value="mRNA"/>
</dbReference>
<dbReference type="EMBL" id="AK135935">
    <property type="protein sequence ID" value="BAE22730.1"/>
    <property type="molecule type" value="mRNA"/>
</dbReference>
<dbReference type="EMBL" id="BC029691">
    <property type="protein sequence ID" value="AAH29691.1"/>
    <property type="molecule type" value="mRNA"/>
</dbReference>
<dbReference type="EMBL" id="BC043693">
    <property type="protein sequence ID" value="AAH43693.1"/>
    <property type="molecule type" value="mRNA"/>
</dbReference>
<dbReference type="CCDS" id="CCDS22934.1"/>
<dbReference type="RefSeq" id="NP_065611.1">
    <property type="nucleotide sequence ID" value="NM_020586.2"/>
</dbReference>
<dbReference type="BMRB" id="Q9JJC9"/>
<dbReference type="SMR" id="Q9JJC9"/>
<dbReference type="FunCoup" id="Q9JJC9">
    <property type="interactions" value="926"/>
</dbReference>
<dbReference type="STRING" id="10090.ENSMUSP00000008573"/>
<dbReference type="iPTMnet" id="Q9JJC9"/>
<dbReference type="PhosphoSitePlus" id="Q9JJC9"/>
<dbReference type="jPOST" id="Q9JJC9"/>
<dbReference type="PaxDb" id="10090-ENSMUSP00000008573"/>
<dbReference type="PeptideAtlas" id="Q9JJC9"/>
<dbReference type="ProteomicsDB" id="269700"/>
<dbReference type="Antibodypedia" id="2395">
    <property type="antibodies" value="105 antibodies from 22 providers"/>
</dbReference>
<dbReference type="DNASU" id="80517"/>
<dbReference type="Ensembl" id="ENSMUST00000008573.9">
    <property type="protein sequence ID" value="ENSMUSP00000008573.8"/>
    <property type="gene ID" value="ENSMUSG00000008429.9"/>
</dbReference>
<dbReference type="GeneID" id="80517"/>
<dbReference type="KEGG" id="mmu:80517"/>
<dbReference type="UCSC" id="uc009oph.2">
    <property type="organism name" value="mouse"/>
</dbReference>
<dbReference type="AGR" id="MGI:1915393"/>
<dbReference type="CTD" id="64224"/>
<dbReference type="MGI" id="MGI:1915393">
    <property type="gene designation" value="Herpud2"/>
</dbReference>
<dbReference type="VEuPathDB" id="HostDB:ENSMUSG00000008429"/>
<dbReference type="eggNOG" id="KOG4583">
    <property type="taxonomic scope" value="Eukaryota"/>
</dbReference>
<dbReference type="GeneTree" id="ENSGT00390000017671"/>
<dbReference type="HOGENOM" id="CLU_058243_0_0_1"/>
<dbReference type="InParanoid" id="Q9JJC9"/>
<dbReference type="OMA" id="YMQLMAA"/>
<dbReference type="OrthoDB" id="83457at9989"/>
<dbReference type="PhylomeDB" id="Q9JJC9"/>
<dbReference type="TreeFam" id="TF324319"/>
<dbReference type="BioGRID-ORCS" id="80517">
    <property type="hits" value="0 hits in 79 CRISPR screens"/>
</dbReference>
<dbReference type="ChiTaRS" id="Herpud2">
    <property type="organism name" value="mouse"/>
</dbReference>
<dbReference type="PRO" id="PR:Q9JJC9"/>
<dbReference type="Proteomes" id="UP000000589">
    <property type="component" value="Chromosome 9"/>
</dbReference>
<dbReference type="RNAct" id="Q9JJC9">
    <property type="molecule type" value="protein"/>
</dbReference>
<dbReference type="Bgee" id="ENSMUSG00000008429">
    <property type="expression patterns" value="Expressed in secondary oocyte and 255 other cell types or tissues"/>
</dbReference>
<dbReference type="GO" id="GO:0016020">
    <property type="term" value="C:membrane"/>
    <property type="evidence" value="ECO:0007669"/>
    <property type="project" value="UniProtKB-SubCell"/>
</dbReference>
<dbReference type="GO" id="GO:0006986">
    <property type="term" value="P:response to unfolded protein"/>
    <property type="evidence" value="ECO:0007669"/>
    <property type="project" value="UniProtKB-KW"/>
</dbReference>
<dbReference type="GO" id="GO:0007283">
    <property type="term" value="P:spermatogenesis"/>
    <property type="evidence" value="ECO:0000270"/>
    <property type="project" value="BHF-UCL"/>
</dbReference>
<dbReference type="CDD" id="cd17119">
    <property type="entry name" value="Ubl_HERP2"/>
    <property type="match status" value="1"/>
</dbReference>
<dbReference type="FunFam" id="3.10.20.90:FF:000046">
    <property type="entry name" value="Homocysteine-responsive endoplasmic reticulum-resident ubiquitin-like domain member 2 protein"/>
    <property type="match status" value="1"/>
</dbReference>
<dbReference type="Gene3D" id="3.10.20.90">
    <property type="entry name" value="Phosphatidylinositol 3-kinase Catalytic Subunit, Chain A, domain 1"/>
    <property type="match status" value="1"/>
</dbReference>
<dbReference type="InterPro" id="IPR039751">
    <property type="entry name" value="HERPUD1/2"/>
</dbReference>
<dbReference type="InterPro" id="IPR000626">
    <property type="entry name" value="Ubiquitin-like_dom"/>
</dbReference>
<dbReference type="InterPro" id="IPR029071">
    <property type="entry name" value="Ubiquitin-like_domsf"/>
</dbReference>
<dbReference type="PANTHER" id="PTHR12943:SF5">
    <property type="entry name" value="HOMOCYSTEINE-RESPONSIVE ENDOPLASMIC RETICULUM-RESIDENT UBIQUITIN-LIKE DOMAIN MEMBER 2 PROTEIN"/>
    <property type="match status" value="1"/>
</dbReference>
<dbReference type="PANTHER" id="PTHR12943">
    <property type="entry name" value="HOMOCYSTEINE-RESPONSIVE ENDOPLASMIC RETICULUM-RESIDENT UNIQUITIN-LIKE DOMAIN HERPUD PROTEIN FAMILY MEMBER"/>
    <property type="match status" value="1"/>
</dbReference>
<dbReference type="Pfam" id="PF00240">
    <property type="entry name" value="ubiquitin"/>
    <property type="match status" value="1"/>
</dbReference>
<dbReference type="SMART" id="SM00213">
    <property type="entry name" value="UBQ"/>
    <property type="match status" value="1"/>
</dbReference>
<dbReference type="SUPFAM" id="SSF54236">
    <property type="entry name" value="Ubiquitin-like"/>
    <property type="match status" value="1"/>
</dbReference>
<dbReference type="PROSITE" id="PS50053">
    <property type="entry name" value="UBIQUITIN_2"/>
    <property type="match status" value="1"/>
</dbReference>
<reference key="1">
    <citation type="submission" date="2000-04" db="EMBL/GenBank/DDBJ databases">
        <title>Isolation of full-length cDNA clones from mouse brain cDNA library made by oligo-capping method.</title>
        <authorList>
            <person name="Osada N."/>
            <person name="Kusuda J."/>
            <person name="Tanuma R."/>
            <person name="Ito A."/>
            <person name="Hirata M."/>
            <person name="Sugano S."/>
            <person name="Hashimoto K."/>
        </authorList>
    </citation>
    <scope>NUCLEOTIDE SEQUENCE [LARGE SCALE MRNA]</scope>
    <source>
        <strain>C57BL/6J</strain>
        <tissue>Brain</tissue>
    </source>
</reference>
<reference key="2">
    <citation type="journal article" date="2005" name="Science">
        <title>The transcriptional landscape of the mammalian genome.</title>
        <authorList>
            <person name="Carninci P."/>
            <person name="Kasukawa T."/>
            <person name="Katayama S."/>
            <person name="Gough J."/>
            <person name="Frith M.C."/>
            <person name="Maeda N."/>
            <person name="Oyama R."/>
            <person name="Ravasi T."/>
            <person name="Lenhard B."/>
            <person name="Wells C."/>
            <person name="Kodzius R."/>
            <person name="Shimokawa K."/>
            <person name="Bajic V.B."/>
            <person name="Brenner S.E."/>
            <person name="Batalov S."/>
            <person name="Forrest A.R."/>
            <person name="Zavolan M."/>
            <person name="Davis M.J."/>
            <person name="Wilming L.G."/>
            <person name="Aidinis V."/>
            <person name="Allen J.E."/>
            <person name="Ambesi-Impiombato A."/>
            <person name="Apweiler R."/>
            <person name="Aturaliya R.N."/>
            <person name="Bailey T.L."/>
            <person name="Bansal M."/>
            <person name="Baxter L."/>
            <person name="Beisel K.W."/>
            <person name="Bersano T."/>
            <person name="Bono H."/>
            <person name="Chalk A.M."/>
            <person name="Chiu K.P."/>
            <person name="Choudhary V."/>
            <person name="Christoffels A."/>
            <person name="Clutterbuck D.R."/>
            <person name="Crowe M.L."/>
            <person name="Dalla E."/>
            <person name="Dalrymple B.P."/>
            <person name="de Bono B."/>
            <person name="Della Gatta G."/>
            <person name="di Bernardo D."/>
            <person name="Down T."/>
            <person name="Engstrom P."/>
            <person name="Fagiolini M."/>
            <person name="Faulkner G."/>
            <person name="Fletcher C.F."/>
            <person name="Fukushima T."/>
            <person name="Furuno M."/>
            <person name="Futaki S."/>
            <person name="Gariboldi M."/>
            <person name="Georgii-Hemming P."/>
            <person name="Gingeras T.R."/>
            <person name="Gojobori T."/>
            <person name="Green R.E."/>
            <person name="Gustincich S."/>
            <person name="Harbers M."/>
            <person name="Hayashi Y."/>
            <person name="Hensch T.K."/>
            <person name="Hirokawa N."/>
            <person name="Hill D."/>
            <person name="Huminiecki L."/>
            <person name="Iacono M."/>
            <person name="Ikeo K."/>
            <person name="Iwama A."/>
            <person name="Ishikawa T."/>
            <person name="Jakt M."/>
            <person name="Kanapin A."/>
            <person name="Katoh M."/>
            <person name="Kawasawa Y."/>
            <person name="Kelso J."/>
            <person name="Kitamura H."/>
            <person name="Kitano H."/>
            <person name="Kollias G."/>
            <person name="Krishnan S.P."/>
            <person name="Kruger A."/>
            <person name="Kummerfeld S.K."/>
            <person name="Kurochkin I.V."/>
            <person name="Lareau L.F."/>
            <person name="Lazarevic D."/>
            <person name="Lipovich L."/>
            <person name="Liu J."/>
            <person name="Liuni S."/>
            <person name="McWilliam S."/>
            <person name="Madan Babu M."/>
            <person name="Madera M."/>
            <person name="Marchionni L."/>
            <person name="Matsuda H."/>
            <person name="Matsuzawa S."/>
            <person name="Miki H."/>
            <person name="Mignone F."/>
            <person name="Miyake S."/>
            <person name="Morris K."/>
            <person name="Mottagui-Tabar S."/>
            <person name="Mulder N."/>
            <person name="Nakano N."/>
            <person name="Nakauchi H."/>
            <person name="Ng P."/>
            <person name="Nilsson R."/>
            <person name="Nishiguchi S."/>
            <person name="Nishikawa S."/>
            <person name="Nori F."/>
            <person name="Ohara O."/>
            <person name="Okazaki Y."/>
            <person name="Orlando V."/>
            <person name="Pang K.C."/>
            <person name="Pavan W.J."/>
            <person name="Pavesi G."/>
            <person name="Pesole G."/>
            <person name="Petrovsky N."/>
            <person name="Piazza S."/>
            <person name="Reed J."/>
            <person name="Reid J.F."/>
            <person name="Ring B.Z."/>
            <person name="Ringwald M."/>
            <person name="Rost B."/>
            <person name="Ruan Y."/>
            <person name="Salzberg S.L."/>
            <person name="Sandelin A."/>
            <person name="Schneider C."/>
            <person name="Schoenbach C."/>
            <person name="Sekiguchi K."/>
            <person name="Semple C.A."/>
            <person name="Seno S."/>
            <person name="Sessa L."/>
            <person name="Sheng Y."/>
            <person name="Shibata Y."/>
            <person name="Shimada H."/>
            <person name="Shimada K."/>
            <person name="Silva D."/>
            <person name="Sinclair B."/>
            <person name="Sperling S."/>
            <person name="Stupka E."/>
            <person name="Sugiura K."/>
            <person name="Sultana R."/>
            <person name="Takenaka Y."/>
            <person name="Taki K."/>
            <person name="Tammoja K."/>
            <person name="Tan S.L."/>
            <person name="Tang S."/>
            <person name="Taylor M.S."/>
            <person name="Tegner J."/>
            <person name="Teichmann S.A."/>
            <person name="Ueda H.R."/>
            <person name="van Nimwegen E."/>
            <person name="Verardo R."/>
            <person name="Wei C.L."/>
            <person name="Yagi K."/>
            <person name="Yamanishi H."/>
            <person name="Zabarovsky E."/>
            <person name="Zhu S."/>
            <person name="Zimmer A."/>
            <person name="Hide W."/>
            <person name="Bult C."/>
            <person name="Grimmond S.M."/>
            <person name="Teasdale R.D."/>
            <person name="Liu E.T."/>
            <person name="Brusic V."/>
            <person name="Quackenbush J."/>
            <person name="Wahlestedt C."/>
            <person name="Mattick J.S."/>
            <person name="Hume D.A."/>
            <person name="Kai C."/>
            <person name="Sasaki D."/>
            <person name="Tomaru Y."/>
            <person name="Fukuda S."/>
            <person name="Kanamori-Katayama M."/>
            <person name="Suzuki M."/>
            <person name="Aoki J."/>
            <person name="Arakawa T."/>
            <person name="Iida J."/>
            <person name="Imamura K."/>
            <person name="Itoh M."/>
            <person name="Kato T."/>
            <person name="Kawaji H."/>
            <person name="Kawagashira N."/>
            <person name="Kawashima T."/>
            <person name="Kojima M."/>
            <person name="Kondo S."/>
            <person name="Konno H."/>
            <person name="Nakano K."/>
            <person name="Ninomiya N."/>
            <person name="Nishio T."/>
            <person name="Okada M."/>
            <person name="Plessy C."/>
            <person name="Shibata K."/>
            <person name="Shiraki T."/>
            <person name="Suzuki S."/>
            <person name="Tagami M."/>
            <person name="Waki K."/>
            <person name="Watahiki A."/>
            <person name="Okamura-Oho Y."/>
            <person name="Suzuki H."/>
            <person name="Kawai J."/>
            <person name="Hayashizaki Y."/>
        </authorList>
    </citation>
    <scope>NUCLEOTIDE SEQUENCE [LARGE SCALE MRNA]</scope>
    <source>
        <strain>C57BL/6J</strain>
        <tissue>Egg</tissue>
        <tissue>Embryo</tissue>
        <tissue>Ovary</tissue>
        <tissue>Uterus</tissue>
    </source>
</reference>
<reference key="3">
    <citation type="journal article" date="2004" name="Genome Res.">
        <title>The status, quality, and expansion of the NIH full-length cDNA project: the Mammalian Gene Collection (MGC).</title>
        <authorList>
            <consortium name="The MGC Project Team"/>
        </authorList>
    </citation>
    <scope>NUCLEOTIDE SEQUENCE [LARGE SCALE MRNA]</scope>
    <source>
        <strain>FVB/N-3</strain>
        <tissue>Mammary tumor</tissue>
    </source>
</reference>
<accession>Q9JJC9</accession>
<accession>Q8K2W2</accession>
<accession>Q9CSZ4</accession>
<accession>Q9D2D0</accession>
<keyword id="KW-0472">Membrane</keyword>
<keyword id="KW-1185">Reference proteome</keyword>
<keyword id="KW-0812">Transmembrane</keyword>
<keyword id="KW-1133">Transmembrane helix</keyword>
<keyword id="KW-0834">Unfolded protein response</keyword>
<comment type="function">
    <text evidence="1">Could be involved in the unfolded protein response (UPR) pathway.</text>
</comment>
<comment type="subcellular location">
    <subcellularLocation>
        <location evidence="5">Membrane</location>
        <topology evidence="5">Single-pass membrane protein</topology>
    </subcellularLocation>
</comment>
<organism>
    <name type="scientific">Mus musculus</name>
    <name type="common">Mouse</name>
    <dbReference type="NCBI Taxonomy" id="10090"/>
    <lineage>
        <taxon>Eukaryota</taxon>
        <taxon>Metazoa</taxon>
        <taxon>Chordata</taxon>
        <taxon>Craniata</taxon>
        <taxon>Vertebrata</taxon>
        <taxon>Euteleostomi</taxon>
        <taxon>Mammalia</taxon>
        <taxon>Eutheria</taxon>
        <taxon>Euarchontoglires</taxon>
        <taxon>Glires</taxon>
        <taxon>Rodentia</taxon>
        <taxon>Myomorpha</taxon>
        <taxon>Muroidea</taxon>
        <taxon>Muridae</taxon>
        <taxon>Murinae</taxon>
        <taxon>Mus</taxon>
        <taxon>Mus</taxon>
    </lineage>
</organism>